<gene>
    <name evidence="1" type="primary">rlmN</name>
    <name type="ordered locus">APJL_1285</name>
</gene>
<accession>B0BQK6</accession>
<protein>
    <recommendedName>
        <fullName evidence="1">Dual-specificity RNA methyltransferase RlmN</fullName>
        <ecNumber evidence="1">2.1.1.192</ecNumber>
    </recommendedName>
    <alternativeName>
        <fullName evidence="1">23S rRNA (adenine(2503)-C(2))-methyltransferase</fullName>
    </alternativeName>
    <alternativeName>
        <fullName evidence="1">23S rRNA m2A2503 methyltransferase</fullName>
    </alternativeName>
    <alternativeName>
        <fullName evidence="1">Ribosomal RNA large subunit methyltransferase N</fullName>
    </alternativeName>
    <alternativeName>
        <fullName evidence="1">tRNA (adenine(37)-C(2))-methyltransferase</fullName>
    </alternativeName>
    <alternativeName>
        <fullName evidence="1">tRNA m2A37 methyltransferase</fullName>
    </alternativeName>
</protein>
<sequence length="393" mass="44189">MSEQTQTCASEIQATNVAVQHPKSEKINLMNLTRQEMRELFAEMGEKPFRADQLMKWIYHFGEDNFDNMSNINKVLREKLKQIAEIKAPEVSVEQRSSDGTIKWAMQVGDQQIETVYIPEDDRATLCVSSQVGCALACKFCSTAQQGFNRNLTVSEIIGQVWRASKIIGNFGVTGVRPITNVVMMGMGEPLLNLNNVIPAMEIMLDDFAYGLSKRRVTLSTAGVVPALDIMREKIDVALAISLHAPNDELRDEIMPINKKYNIKMLMDSVHKYLEVSNANHGKVTIEYVLLDHVNDGTEHAHQLAEVLKNTPCKINLIPWNPFPEAPYGKSSNSRVDRFQKTLMEYGFTVIVRKTRGDDIDAACGQLAGDVIDRTKRTMEKRKFGKGIAVQNH</sequence>
<organism>
    <name type="scientific">Actinobacillus pleuropneumoniae serotype 3 (strain JL03)</name>
    <dbReference type="NCBI Taxonomy" id="434271"/>
    <lineage>
        <taxon>Bacteria</taxon>
        <taxon>Pseudomonadati</taxon>
        <taxon>Pseudomonadota</taxon>
        <taxon>Gammaproteobacteria</taxon>
        <taxon>Pasteurellales</taxon>
        <taxon>Pasteurellaceae</taxon>
        <taxon>Actinobacillus</taxon>
    </lineage>
</organism>
<keyword id="KW-0004">4Fe-4S</keyword>
<keyword id="KW-0963">Cytoplasm</keyword>
<keyword id="KW-1015">Disulfide bond</keyword>
<keyword id="KW-0408">Iron</keyword>
<keyword id="KW-0411">Iron-sulfur</keyword>
<keyword id="KW-0479">Metal-binding</keyword>
<keyword id="KW-0489">Methyltransferase</keyword>
<keyword id="KW-0698">rRNA processing</keyword>
<keyword id="KW-0949">S-adenosyl-L-methionine</keyword>
<keyword id="KW-0808">Transferase</keyword>
<keyword id="KW-0819">tRNA processing</keyword>
<proteinExistence type="inferred from homology"/>
<reference key="1">
    <citation type="journal article" date="2008" name="PLoS ONE">
        <title>Genome biology of Actinobacillus pleuropneumoniae JL03, an isolate of serotype 3 prevalent in China.</title>
        <authorList>
            <person name="Xu Z."/>
            <person name="Zhou Y."/>
            <person name="Li L."/>
            <person name="Zhou R."/>
            <person name="Xiao S."/>
            <person name="Wan Y."/>
            <person name="Zhang S."/>
            <person name="Wang K."/>
            <person name="Li W."/>
            <person name="Li L."/>
            <person name="Jin H."/>
            <person name="Kang M."/>
            <person name="Dalai B."/>
            <person name="Li T."/>
            <person name="Liu L."/>
            <person name="Cheng Y."/>
            <person name="Zhang L."/>
            <person name="Xu T."/>
            <person name="Zheng H."/>
            <person name="Pu S."/>
            <person name="Wang B."/>
            <person name="Gu W."/>
            <person name="Zhang X.L."/>
            <person name="Zhu G.-F."/>
            <person name="Wang S."/>
            <person name="Zhao G.-P."/>
            <person name="Chen H."/>
        </authorList>
    </citation>
    <scope>NUCLEOTIDE SEQUENCE [LARGE SCALE GENOMIC DNA]</scope>
    <source>
        <strain>JL03</strain>
    </source>
</reference>
<comment type="function">
    <text evidence="1">Specifically methylates position 2 of adenine 2503 in 23S rRNA and position 2 of adenine 37 in tRNAs. m2A2503 modification seems to play a crucial role in the proofreading step occurring at the peptidyl transferase center and thus would serve to optimize ribosomal fidelity.</text>
</comment>
<comment type="catalytic activity">
    <reaction evidence="1">
        <text>adenosine(2503) in 23S rRNA + 2 reduced [2Fe-2S]-[ferredoxin] + 2 S-adenosyl-L-methionine = 2-methyladenosine(2503) in 23S rRNA + 5'-deoxyadenosine + L-methionine + 2 oxidized [2Fe-2S]-[ferredoxin] + S-adenosyl-L-homocysteine</text>
        <dbReference type="Rhea" id="RHEA:42916"/>
        <dbReference type="Rhea" id="RHEA-COMP:10000"/>
        <dbReference type="Rhea" id="RHEA-COMP:10001"/>
        <dbReference type="Rhea" id="RHEA-COMP:10152"/>
        <dbReference type="Rhea" id="RHEA-COMP:10282"/>
        <dbReference type="ChEBI" id="CHEBI:17319"/>
        <dbReference type="ChEBI" id="CHEBI:33737"/>
        <dbReference type="ChEBI" id="CHEBI:33738"/>
        <dbReference type="ChEBI" id="CHEBI:57844"/>
        <dbReference type="ChEBI" id="CHEBI:57856"/>
        <dbReference type="ChEBI" id="CHEBI:59789"/>
        <dbReference type="ChEBI" id="CHEBI:74411"/>
        <dbReference type="ChEBI" id="CHEBI:74497"/>
        <dbReference type="EC" id="2.1.1.192"/>
    </reaction>
</comment>
<comment type="catalytic activity">
    <reaction evidence="1">
        <text>adenosine(37) in tRNA + 2 reduced [2Fe-2S]-[ferredoxin] + 2 S-adenosyl-L-methionine = 2-methyladenosine(37) in tRNA + 5'-deoxyadenosine + L-methionine + 2 oxidized [2Fe-2S]-[ferredoxin] + S-adenosyl-L-homocysteine</text>
        <dbReference type="Rhea" id="RHEA:43332"/>
        <dbReference type="Rhea" id="RHEA-COMP:10000"/>
        <dbReference type="Rhea" id="RHEA-COMP:10001"/>
        <dbReference type="Rhea" id="RHEA-COMP:10162"/>
        <dbReference type="Rhea" id="RHEA-COMP:10485"/>
        <dbReference type="ChEBI" id="CHEBI:17319"/>
        <dbReference type="ChEBI" id="CHEBI:33737"/>
        <dbReference type="ChEBI" id="CHEBI:33738"/>
        <dbReference type="ChEBI" id="CHEBI:57844"/>
        <dbReference type="ChEBI" id="CHEBI:57856"/>
        <dbReference type="ChEBI" id="CHEBI:59789"/>
        <dbReference type="ChEBI" id="CHEBI:74411"/>
        <dbReference type="ChEBI" id="CHEBI:74497"/>
        <dbReference type="EC" id="2.1.1.192"/>
    </reaction>
</comment>
<comment type="cofactor">
    <cofactor evidence="1">
        <name>[4Fe-4S] cluster</name>
        <dbReference type="ChEBI" id="CHEBI:49883"/>
    </cofactor>
    <text evidence="1">Binds 1 [4Fe-4S] cluster. The cluster is coordinated with 3 cysteines and an exchangeable S-adenosyl-L-methionine.</text>
</comment>
<comment type="subcellular location">
    <subcellularLocation>
        <location evidence="1">Cytoplasm</location>
    </subcellularLocation>
</comment>
<comment type="miscellaneous">
    <text evidence="1">Reaction proceeds by a ping-pong mechanism involving intermediate methylation of a conserved cysteine residue.</text>
</comment>
<comment type="similarity">
    <text evidence="1">Belongs to the radical SAM superfamily. RlmN family.</text>
</comment>
<name>RLMN_ACTPJ</name>
<feature type="chain" id="PRO_0000350001" description="Dual-specificity RNA methyltransferase RlmN">
    <location>
        <begin position="1"/>
        <end position="393"/>
    </location>
</feature>
<feature type="domain" description="Radical SAM core" evidence="2">
    <location>
        <begin position="120"/>
        <end position="359"/>
    </location>
</feature>
<feature type="active site" description="Proton acceptor" evidence="1">
    <location>
        <position position="114"/>
    </location>
</feature>
<feature type="active site" description="S-methylcysteine intermediate" evidence="1">
    <location>
        <position position="364"/>
    </location>
</feature>
<feature type="binding site" evidence="1">
    <location>
        <position position="134"/>
    </location>
    <ligand>
        <name>[4Fe-4S] cluster</name>
        <dbReference type="ChEBI" id="CHEBI:49883"/>
        <note>4Fe-4S-S-AdoMet</note>
    </ligand>
</feature>
<feature type="binding site" evidence="1">
    <location>
        <position position="138"/>
    </location>
    <ligand>
        <name>[4Fe-4S] cluster</name>
        <dbReference type="ChEBI" id="CHEBI:49883"/>
        <note>4Fe-4S-S-AdoMet</note>
    </ligand>
</feature>
<feature type="binding site" evidence="1">
    <location>
        <position position="141"/>
    </location>
    <ligand>
        <name>[4Fe-4S] cluster</name>
        <dbReference type="ChEBI" id="CHEBI:49883"/>
        <note>4Fe-4S-S-AdoMet</note>
    </ligand>
</feature>
<feature type="binding site" evidence="1">
    <location>
        <begin position="188"/>
        <end position="189"/>
    </location>
    <ligand>
        <name>S-adenosyl-L-methionine</name>
        <dbReference type="ChEBI" id="CHEBI:59789"/>
    </ligand>
</feature>
<feature type="binding site" evidence="1">
    <location>
        <position position="220"/>
    </location>
    <ligand>
        <name>S-adenosyl-L-methionine</name>
        <dbReference type="ChEBI" id="CHEBI:59789"/>
    </ligand>
</feature>
<feature type="binding site" evidence="1">
    <location>
        <begin position="242"/>
        <end position="244"/>
    </location>
    <ligand>
        <name>S-adenosyl-L-methionine</name>
        <dbReference type="ChEBI" id="CHEBI:59789"/>
    </ligand>
</feature>
<feature type="binding site" evidence="1">
    <location>
        <position position="321"/>
    </location>
    <ligand>
        <name>S-adenosyl-L-methionine</name>
        <dbReference type="ChEBI" id="CHEBI:59789"/>
    </ligand>
</feature>
<feature type="disulfide bond" description="(transient)" evidence="1">
    <location>
        <begin position="127"/>
        <end position="364"/>
    </location>
</feature>
<dbReference type="EC" id="2.1.1.192" evidence="1"/>
<dbReference type="EMBL" id="CP000687">
    <property type="protein sequence ID" value="ABY69841.1"/>
    <property type="molecule type" value="Genomic_DNA"/>
</dbReference>
<dbReference type="RefSeq" id="WP_005608495.1">
    <property type="nucleotide sequence ID" value="NC_010278.1"/>
</dbReference>
<dbReference type="SMR" id="B0BQK6"/>
<dbReference type="KEGG" id="apj:APJL_1285"/>
<dbReference type="HOGENOM" id="CLU_029101_0_0_6"/>
<dbReference type="Proteomes" id="UP000008547">
    <property type="component" value="Chromosome"/>
</dbReference>
<dbReference type="GO" id="GO:0005737">
    <property type="term" value="C:cytoplasm"/>
    <property type="evidence" value="ECO:0007669"/>
    <property type="project" value="UniProtKB-SubCell"/>
</dbReference>
<dbReference type="GO" id="GO:0051539">
    <property type="term" value="F:4 iron, 4 sulfur cluster binding"/>
    <property type="evidence" value="ECO:0007669"/>
    <property type="project" value="UniProtKB-UniRule"/>
</dbReference>
<dbReference type="GO" id="GO:0046872">
    <property type="term" value="F:metal ion binding"/>
    <property type="evidence" value="ECO:0007669"/>
    <property type="project" value="UniProtKB-KW"/>
</dbReference>
<dbReference type="GO" id="GO:0070040">
    <property type="term" value="F:rRNA (adenine(2503)-C2-)-methyltransferase activity"/>
    <property type="evidence" value="ECO:0007669"/>
    <property type="project" value="UniProtKB-UniRule"/>
</dbReference>
<dbReference type="GO" id="GO:0019843">
    <property type="term" value="F:rRNA binding"/>
    <property type="evidence" value="ECO:0007669"/>
    <property type="project" value="UniProtKB-UniRule"/>
</dbReference>
<dbReference type="GO" id="GO:0002935">
    <property type="term" value="F:tRNA (adenine(37)-C2)-methyltransferase activity"/>
    <property type="evidence" value="ECO:0007669"/>
    <property type="project" value="UniProtKB-UniRule"/>
</dbReference>
<dbReference type="GO" id="GO:0000049">
    <property type="term" value="F:tRNA binding"/>
    <property type="evidence" value="ECO:0007669"/>
    <property type="project" value="UniProtKB-UniRule"/>
</dbReference>
<dbReference type="GO" id="GO:0070475">
    <property type="term" value="P:rRNA base methylation"/>
    <property type="evidence" value="ECO:0007669"/>
    <property type="project" value="UniProtKB-UniRule"/>
</dbReference>
<dbReference type="GO" id="GO:0030488">
    <property type="term" value="P:tRNA methylation"/>
    <property type="evidence" value="ECO:0007669"/>
    <property type="project" value="UniProtKB-UniRule"/>
</dbReference>
<dbReference type="CDD" id="cd01335">
    <property type="entry name" value="Radical_SAM"/>
    <property type="match status" value="1"/>
</dbReference>
<dbReference type="FunFam" id="1.10.150.530:FF:000003">
    <property type="entry name" value="Dual-specificity RNA methyltransferase RlmN"/>
    <property type="match status" value="1"/>
</dbReference>
<dbReference type="FunFam" id="3.20.20.70:FF:000008">
    <property type="entry name" value="Dual-specificity RNA methyltransferase RlmN"/>
    <property type="match status" value="1"/>
</dbReference>
<dbReference type="Gene3D" id="1.10.150.530">
    <property type="match status" value="1"/>
</dbReference>
<dbReference type="Gene3D" id="3.20.20.70">
    <property type="entry name" value="Aldolase class I"/>
    <property type="match status" value="1"/>
</dbReference>
<dbReference type="HAMAP" id="MF_01849">
    <property type="entry name" value="RNA_methyltr_RlmN"/>
    <property type="match status" value="1"/>
</dbReference>
<dbReference type="InterPro" id="IPR013785">
    <property type="entry name" value="Aldolase_TIM"/>
</dbReference>
<dbReference type="InterPro" id="IPR040072">
    <property type="entry name" value="Methyltransferase_A"/>
</dbReference>
<dbReference type="InterPro" id="IPR048641">
    <property type="entry name" value="RlmN_N"/>
</dbReference>
<dbReference type="InterPro" id="IPR027492">
    <property type="entry name" value="RNA_MTrfase_RlmN"/>
</dbReference>
<dbReference type="InterPro" id="IPR004383">
    <property type="entry name" value="rRNA_lsu_MTrfase_RlmN/Cfr"/>
</dbReference>
<dbReference type="InterPro" id="IPR007197">
    <property type="entry name" value="rSAM"/>
</dbReference>
<dbReference type="NCBIfam" id="NF008396">
    <property type="entry name" value="PRK11194.1"/>
    <property type="match status" value="1"/>
</dbReference>
<dbReference type="NCBIfam" id="TIGR00048">
    <property type="entry name" value="rRNA_mod_RlmN"/>
    <property type="match status" value="1"/>
</dbReference>
<dbReference type="PANTHER" id="PTHR30544">
    <property type="entry name" value="23S RRNA METHYLTRANSFERASE"/>
    <property type="match status" value="1"/>
</dbReference>
<dbReference type="PANTHER" id="PTHR30544:SF5">
    <property type="entry name" value="RADICAL SAM CORE DOMAIN-CONTAINING PROTEIN"/>
    <property type="match status" value="1"/>
</dbReference>
<dbReference type="Pfam" id="PF04055">
    <property type="entry name" value="Radical_SAM"/>
    <property type="match status" value="1"/>
</dbReference>
<dbReference type="Pfam" id="PF21016">
    <property type="entry name" value="RlmN_N"/>
    <property type="match status" value="1"/>
</dbReference>
<dbReference type="PIRSF" id="PIRSF006004">
    <property type="entry name" value="CHP00048"/>
    <property type="match status" value="1"/>
</dbReference>
<dbReference type="SFLD" id="SFLDF00275">
    <property type="entry name" value="adenosine_C2_methyltransferase"/>
    <property type="match status" value="1"/>
</dbReference>
<dbReference type="SFLD" id="SFLDG01062">
    <property type="entry name" value="methyltransferase_(Class_A)"/>
    <property type="match status" value="1"/>
</dbReference>
<dbReference type="SUPFAM" id="SSF102114">
    <property type="entry name" value="Radical SAM enzymes"/>
    <property type="match status" value="1"/>
</dbReference>
<dbReference type="PROSITE" id="PS51918">
    <property type="entry name" value="RADICAL_SAM"/>
    <property type="match status" value="1"/>
</dbReference>
<evidence type="ECO:0000255" key="1">
    <source>
        <dbReference type="HAMAP-Rule" id="MF_01849"/>
    </source>
</evidence>
<evidence type="ECO:0000255" key="2">
    <source>
        <dbReference type="PROSITE-ProRule" id="PRU01266"/>
    </source>
</evidence>